<proteinExistence type="inferred from homology"/>
<sequence length="230" mass="25209">MTTLTARPEAITFDPQQSALIVVDMQNAYATPGGYLDLAGFDVSTTRPVIANIQTAVTAARAAGMLIIWFQNGWDEQYVEAGGPGSPNFHKSNALKTMRKQPQLQGKLLAKGSWDYQLVDELVPQPGDIVLPKPRYSGFFNTPLDSILRSRGIRHLVFTGIATNVCVESTLRDGFFLEYFGVVLEDATHQAGPKFAQKAALFNIETFFGWVSDVETFCDALSPTSFAHIA</sequence>
<dbReference type="EC" id="3.5.1.110" evidence="1"/>
<dbReference type="EMBL" id="CP001396">
    <property type="protein sequence ID" value="ACR64346.1"/>
    <property type="molecule type" value="Genomic_DNA"/>
</dbReference>
<dbReference type="RefSeq" id="WP_001393558.1">
    <property type="nucleotide sequence ID" value="NC_012759.1"/>
</dbReference>
<dbReference type="SMR" id="C4ZQD9"/>
<dbReference type="KEGG" id="ebw:BWG_0865"/>
<dbReference type="HOGENOM" id="CLU_068979_8_0_6"/>
<dbReference type="GO" id="GO:0016811">
    <property type="term" value="F:hydrolase activity, acting on carbon-nitrogen (but not peptide) bonds, in linear amides"/>
    <property type="evidence" value="ECO:0007669"/>
    <property type="project" value="UniProtKB-UniRule"/>
</dbReference>
<dbReference type="GO" id="GO:0019740">
    <property type="term" value="P:nitrogen utilization"/>
    <property type="evidence" value="ECO:0007669"/>
    <property type="project" value="UniProtKB-UniRule"/>
</dbReference>
<dbReference type="GO" id="GO:0006212">
    <property type="term" value="P:uracil catabolic process"/>
    <property type="evidence" value="ECO:0007669"/>
    <property type="project" value="UniProtKB-UniRule"/>
</dbReference>
<dbReference type="CDD" id="cd00431">
    <property type="entry name" value="cysteine_hydrolases"/>
    <property type="match status" value="1"/>
</dbReference>
<dbReference type="FunFam" id="3.40.50.850:FF:000004">
    <property type="entry name" value="Peroxyureidoacrylate/ureidoacrylate amidohydrolase RutB"/>
    <property type="match status" value="1"/>
</dbReference>
<dbReference type="Gene3D" id="3.40.50.850">
    <property type="entry name" value="Isochorismatase-like"/>
    <property type="match status" value="1"/>
</dbReference>
<dbReference type="HAMAP" id="MF_00830">
    <property type="entry name" value="RutB"/>
    <property type="match status" value="1"/>
</dbReference>
<dbReference type="InterPro" id="IPR000868">
    <property type="entry name" value="Isochorismatase-like_dom"/>
</dbReference>
<dbReference type="InterPro" id="IPR050272">
    <property type="entry name" value="Isochorismatase-like_hydrls"/>
</dbReference>
<dbReference type="InterPro" id="IPR036380">
    <property type="entry name" value="Isochorismatase-like_sf"/>
</dbReference>
<dbReference type="InterPro" id="IPR019916">
    <property type="entry name" value="RutB"/>
</dbReference>
<dbReference type="NCBIfam" id="TIGR03614">
    <property type="entry name" value="RutB"/>
    <property type="match status" value="1"/>
</dbReference>
<dbReference type="PANTHER" id="PTHR43540:SF6">
    <property type="entry name" value="ISOCHORISMATASE-LIKE DOMAIN-CONTAINING PROTEIN"/>
    <property type="match status" value="1"/>
</dbReference>
<dbReference type="PANTHER" id="PTHR43540">
    <property type="entry name" value="PEROXYUREIDOACRYLATE/UREIDOACRYLATE AMIDOHYDROLASE-RELATED"/>
    <property type="match status" value="1"/>
</dbReference>
<dbReference type="Pfam" id="PF00857">
    <property type="entry name" value="Isochorismatase"/>
    <property type="match status" value="1"/>
</dbReference>
<dbReference type="SUPFAM" id="SSF52499">
    <property type="entry name" value="Isochorismatase-like hydrolases"/>
    <property type="match status" value="1"/>
</dbReference>
<name>RUTB_ECOBW</name>
<organism>
    <name type="scientific">Escherichia coli (strain K12 / MC4100 / BW2952)</name>
    <dbReference type="NCBI Taxonomy" id="595496"/>
    <lineage>
        <taxon>Bacteria</taxon>
        <taxon>Pseudomonadati</taxon>
        <taxon>Pseudomonadota</taxon>
        <taxon>Gammaproteobacteria</taxon>
        <taxon>Enterobacterales</taxon>
        <taxon>Enterobacteriaceae</taxon>
        <taxon>Escherichia</taxon>
    </lineage>
</organism>
<keyword id="KW-0378">Hydrolase</keyword>
<comment type="function">
    <text evidence="1">Hydrolyzes ureidoacrylate to form aminoacrylate and carbamate. The carbamate hydrolyzes spontaneously, thereby releasing one of the nitrogen atoms of the pyrimidine ring as ammonia and one of its carbon atoms as CO2.</text>
</comment>
<comment type="catalytic activity">
    <reaction evidence="1">
        <text>(Z)-3-ureidoacrylate + H2O + H(+) = (Z)-3-aminoacrylate + NH4(+) + CO2</text>
        <dbReference type="Rhea" id="RHEA:42624"/>
        <dbReference type="ChEBI" id="CHEBI:15377"/>
        <dbReference type="ChEBI" id="CHEBI:15378"/>
        <dbReference type="ChEBI" id="CHEBI:16526"/>
        <dbReference type="ChEBI" id="CHEBI:28938"/>
        <dbReference type="ChEBI" id="CHEBI:59891"/>
        <dbReference type="ChEBI" id="CHEBI:59894"/>
        <dbReference type="EC" id="3.5.1.110"/>
    </reaction>
</comment>
<comment type="catalytic activity">
    <reaction evidence="1">
        <text>(Z)-3-ureidoacrylate + H2O = (Z)-3-aminoacrylate + carbamate + H(+)</text>
        <dbReference type="Rhea" id="RHEA:31603"/>
        <dbReference type="ChEBI" id="CHEBI:13941"/>
        <dbReference type="ChEBI" id="CHEBI:15377"/>
        <dbReference type="ChEBI" id="CHEBI:15378"/>
        <dbReference type="ChEBI" id="CHEBI:59891"/>
        <dbReference type="ChEBI" id="CHEBI:59894"/>
    </reaction>
</comment>
<comment type="catalytic activity">
    <reaction evidence="1">
        <text>(Z)-2-methylureidoacrylate + H2O + H(+) = (Z)-2-methylaminoacrylate + NH4(+) + CO2</text>
        <dbReference type="Rhea" id="RHEA:42620"/>
        <dbReference type="ChEBI" id="CHEBI:15377"/>
        <dbReference type="ChEBI" id="CHEBI:15378"/>
        <dbReference type="ChEBI" id="CHEBI:16526"/>
        <dbReference type="ChEBI" id="CHEBI:28938"/>
        <dbReference type="ChEBI" id="CHEBI:143783"/>
        <dbReference type="ChEBI" id="CHEBI:145735"/>
        <dbReference type="EC" id="3.5.1.110"/>
    </reaction>
</comment>
<comment type="induction">
    <text evidence="1">Up-regulated by the nitrogen regulatory protein C (NtrC also called GlnG) and repressed by RutR.</text>
</comment>
<comment type="similarity">
    <text evidence="1">Belongs to the isochorismatase family. RutB subfamily.</text>
</comment>
<evidence type="ECO:0000255" key="1">
    <source>
        <dbReference type="HAMAP-Rule" id="MF_00830"/>
    </source>
</evidence>
<reference key="1">
    <citation type="journal article" date="2009" name="J. Bacteriol.">
        <title>Genomic sequencing reveals regulatory mutations and recombinational events in the widely used MC4100 lineage of Escherichia coli K-12.</title>
        <authorList>
            <person name="Ferenci T."/>
            <person name="Zhou Z."/>
            <person name="Betteridge T."/>
            <person name="Ren Y."/>
            <person name="Liu Y."/>
            <person name="Feng L."/>
            <person name="Reeves P.R."/>
            <person name="Wang L."/>
        </authorList>
    </citation>
    <scope>NUCLEOTIDE SEQUENCE [LARGE SCALE GENOMIC DNA]</scope>
    <source>
        <strain>K12 / MC4100 / BW2952</strain>
    </source>
</reference>
<protein>
    <recommendedName>
        <fullName evidence="1">Ureidoacrylate amidohydrolase RutB</fullName>
        <ecNumber evidence="1">3.5.1.110</ecNumber>
    </recommendedName>
</protein>
<accession>C4ZQD9</accession>
<feature type="chain" id="PRO_0000402663" description="Ureidoacrylate amidohydrolase RutB">
    <location>
        <begin position="1"/>
        <end position="230"/>
    </location>
</feature>
<feature type="active site" description="Proton acceptor" evidence="1">
    <location>
        <position position="24"/>
    </location>
</feature>
<feature type="active site" evidence="1">
    <location>
        <position position="133"/>
    </location>
</feature>
<feature type="active site" description="Nucleophile" evidence="1">
    <location>
        <position position="166"/>
    </location>
</feature>
<gene>
    <name evidence="1" type="primary">rutB</name>
    <name type="ordered locus">BWG_0865</name>
</gene>